<protein>
    <recommendedName>
        <fullName evidence="1">Soluble pyridine nucleotide transhydrogenase</fullName>
        <shortName evidence="1">STH</shortName>
        <ecNumber evidence="1">1.6.1.1</ecNumber>
    </recommendedName>
    <alternativeName>
        <fullName evidence="1">NAD(P)(+) transhydrogenase [B-specific]</fullName>
    </alternativeName>
</protein>
<dbReference type="EC" id="1.6.1.1" evidence="1"/>
<dbReference type="EMBL" id="CP000749">
    <property type="protein sequence ID" value="ABR70645.1"/>
    <property type="molecule type" value="Genomic_DNA"/>
</dbReference>
<dbReference type="SMR" id="A6VW16"/>
<dbReference type="STRING" id="400668.Mmwyl1_1719"/>
<dbReference type="KEGG" id="mmw:Mmwyl1_1719"/>
<dbReference type="eggNOG" id="COG1249">
    <property type="taxonomic scope" value="Bacteria"/>
</dbReference>
<dbReference type="HOGENOM" id="CLU_016755_0_0_6"/>
<dbReference type="OrthoDB" id="9800167at2"/>
<dbReference type="GO" id="GO:0005829">
    <property type="term" value="C:cytosol"/>
    <property type="evidence" value="ECO:0007669"/>
    <property type="project" value="TreeGrafter"/>
</dbReference>
<dbReference type="GO" id="GO:0004148">
    <property type="term" value="F:dihydrolipoyl dehydrogenase (NADH) activity"/>
    <property type="evidence" value="ECO:0007669"/>
    <property type="project" value="TreeGrafter"/>
</dbReference>
<dbReference type="GO" id="GO:0050660">
    <property type="term" value="F:flavin adenine dinucleotide binding"/>
    <property type="evidence" value="ECO:0007669"/>
    <property type="project" value="TreeGrafter"/>
</dbReference>
<dbReference type="GO" id="GO:0003957">
    <property type="term" value="F:NAD(P)+ transhydrogenase (Si-specific) activity"/>
    <property type="evidence" value="ECO:0007669"/>
    <property type="project" value="UniProtKB-UniRule"/>
</dbReference>
<dbReference type="GO" id="GO:0006103">
    <property type="term" value="P:2-oxoglutarate metabolic process"/>
    <property type="evidence" value="ECO:0007669"/>
    <property type="project" value="TreeGrafter"/>
</dbReference>
<dbReference type="GO" id="GO:0006739">
    <property type="term" value="P:NADP metabolic process"/>
    <property type="evidence" value="ECO:0007669"/>
    <property type="project" value="UniProtKB-UniRule"/>
</dbReference>
<dbReference type="FunFam" id="3.30.390.30:FF:000002">
    <property type="entry name" value="Soluble pyridine nucleotide transhydrogenase"/>
    <property type="match status" value="1"/>
</dbReference>
<dbReference type="FunFam" id="3.50.50.60:FF:000008">
    <property type="entry name" value="Soluble pyridine nucleotide transhydrogenase"/>
    <property type="match status" value="1"/>
</dbReference>
<dbReference type="Gene3D" id="3.30.390.30">
    <property type="match status" value="1"/>
</dbReference>
<dbReference type="Gene3D" id="3.50.50.60">
    <property type="entry name" value="FAD/NAD(P)-binding domain"/>
    <property type="match status" value="2"/>
</dbReference>
<dbReference type="HAMAP" id="MF_00247">
    <property type="entry name" value="SthA"/>
    <property type="match status" value="1"/>
</dbReference>
<dbReference type="InterPro" id="IPR050151">
    <property type="entry name" value="Class-I_Pyr_Nuc-Dis_Oxidored"/>
</dbReference>
<dbReference type="InterPro" id="IPR036188">
    <property type="entry name" value="FAD/NAD-bd_sf"/>
</dbReference>
<dbReference type="InterPro" id="IPR023753">
    <property type="entry name" value="FAD/NAD-binding_dom"/>
</dbReference>
<dbReference type="InterPro" id="IPR016156">
    <property type="entry name" value="FAD/NAD-linked_Rdtase_dimer_sf"/>
</dbReference>
<dbReference type="InterPro" id="IPR001100">
    <property type="entry name" value="Pyr_nuc-diS_OxRdtase"/>
</dbReference>
<dbReference type="InterPro" id="IPR004099">
    <property type="entry name" value="Pyr_nucl-diS_OxRdtase_dimer"/>
</dbReference>
<dbReference type="InterPro" id="IPR022962">
    <property type="entry name" value="STH_gammaproteobact"/>
</dbReference>
<dbReference type="NCBIfam" id="NF003585">
    <property type="entry name" value="PRK05249.1"/>
    <property type="match status" value="1"/>
</dbReference>
<dbReference type="PANTHER" id="PTHR22912">
    <property type="entry name" value="DISULFIDE OXIDOREDUCTASE"/>
    <property type="match status" value="1"/>
</dbReference>
<dbReference type="PANTHER" id="PTHR22912:SF93">
    <property type="entry name" value="SOLUBLE PYRIDINE NUCLEOTIDE TRANSHYDROGENASE"/>
    <property type="match status" value="1"/>
</dbReference>
<dbReference type="Pfam" id="PF07992">
    <property type="entry name" value="Pyr_redox_2"/>
    <property type="match status" value="1"/>
</dbReference>
<dbReference type="Pfam" id="PF02852">
    <property type="entry name" value="Pyr_redox_dim"/>
    <property type="match status" value="1"/>
</dbReference>
<dbReference type="PIRSF" id="PIRSF000350">
    <property type="entry name" value="Mercury_reductase_MerA"/>
    <property type="match status" value="1"/>
</dbReference>
<dbReference type="PRINTS" id="PR00368">
    <property type="entry name" value="FADPNR"/>
</dbReference>
<dbReference type="PRINTS" id="PR00411">
    <property type="entry name" value="PNDRDTASEI"/>
</dbReference>
<dbReference type="SUPFAM" id="SSF51905">
    <property type="entry name" value="FAD/NAD(P)-binding domain"/>
    <property type="match status" value="1"/>
</dbReference>
<dbReference type="SUPFAM" id="SSF55424">
    <property type="entry name" value="FAD/NAD-linked reductases, dimerisation (C-terminal) domain"/>
    <property type="match status" value="1"/>
</dbReference>
<evidence type="ECO:0000255" key="1">
    <source>
        <dbReference type="HAMAP-Rule" id="MF_00247"/>
    </source>
</evidence>
<feature type="chain" id="PRO_1000078411" description="Soluble pyridine nucleotide transhydrogenase">
    <location>
        <begin position="1"/>
        <end position="464"/>
    </location>
</feature>
<feature type="binding site" evidence="1">
    <location>
        <begin position="35"/>
        <end position="44"/>
    </location>
    <ligand>
        <name>FAD</name>
        <dbReference type="ChEBI" id="CHEBI:57692"/>
    </ligand>
</feature>
<organism>
    <name type="scientific">Marinomonas sp. (strain MWYL1)</name>
    <dbReference type="NCBI Taxonomy" id="400668"/>
    <lineage>
        <taxon>Bacteria</taxon>
        <taxon>Pseudomonadati</taxon>
        <taxon>Pseudomonadota</taxon>
        <taxon>Gammaproteobacteria</taxon>
        <taxon>Oceanospirillales</taxon>
        <taxon>Oceanospirillaceae</taxon>
        <taxon>Marinomonas</taxon>
    </lineage>
</organism>
<sequence>MTTRHYDVVVLGTGPAGEGAAMSAAKAGKRVAVIEASSQVGGSCTHLGTIPSKALRHAVKEIIAFNTNPMFRDIGEPRWFSFPKVLDRANRVIDKQVMGRTEYYARNRIDIYFGRGKFKDANTIEVNTYEKGPELLEAKKVVIATGSRPYRPANIDFSHPRIYCSDTILSLSHTPRSLIIYGAGVIGCEYASIFCGLGVRVELINPAKKLLSFLDDEITDALSYHLRDGGVLIRHNETYDSVETTERGVVMHMASGKKLRADALLFCNGRSGNTDNLGLESINLEVNSRGQLAVNDTYQTQVENVYAAGDVIGWPSLASAAYDQGRAAAANMFGAPGGEFISEVPTGIYTIPEISSVGKTEAELTAEKVPYEVGRAFFKNTARAQITGEAVGMLKILFHRESLELLGIHCFGDQASEIVHIGQAIMKQPGKQNTLKYFLNTTFNYPTMAEAYRVAALNGFNRVF</sequence>
<gene>
    <name evidence="1" type="primary">sthA</name>
    <name type="ordered locus">Mmwyl1_1719</name>
</gene>
<reference key="1">
    <citation type="submission" date="2007-06" db="EMBL/GenBank/DDBJ databases">
        <title>Complete sequence of Marinomonas sp. MWYL1.</title>
        <authorList>
            <consortium name="US DOE Joint Genome Institute"/>
            <person name="Copeland A."/>
            <person name="Lucas S."/>
            <person name="Lapidus A."/>
            <person name="Barry K."/>
            <person name="Glavina del Rio T."/>
            <person name="Dalin E."/>
            <person name="Tice H."/>
            <person name="Pitluck S."/>
            <person name="Kiss H."/>
            <person name="Brettin T."/>
            <person name="Bruce D."/>
            <person name="Detter J.C."/>
            <person name="Han C."/>
            <person name="Schmutz J."/>
            <person name="Larimer F."/>
            <person name="Land M."/>
            <person name="Hauser L."/>
            <person name="Kyrpides N."/>
            <person name="Kim E."/>
            <person name="Johnston A.W.B."/>
            <person name="Todd J.D."/>
            <person name="Rogers R."/>
            <person name="Wexler M."/>
            <person name="Bond P.L."/>
            <person name="Li Y."/>
            <person name="Richardson P."/>
        </authorList>
    </citation>
    <scope>NUCLEOTIDE SEQUENCE [LARGE SCALE GENOMIC DNA]</scope>
    <source>
        <strain>MWYL1</strain>
    </source>
</reference>
<name>STHA_MARMS</name>
<keyword id="KW-0963">Cytoplasm</keyword>
<keyword id="KW-0274">FAD</keyword>
<keyword id="KW-0285">Flavoprotein</keyword>
<keyword id="KW-0520">NAD</keyword>
<keyword id="KW-0521">NADP</keyword>
<keyword id="KW-0560">Oxidoreductase</keyword>
<accession>A6VW16</accession>
<proteinExistence type="inferred from homology"/>
<comment type="function">
    <text evidence="1">Conversion of NADPH, generated by peripheral catabolic pathways, to NADH, which can enter the respiratory chain for energy generation.</text>
</comment>
<comment type="catalytic activity">
    <reaction evidence="1">
        <text>NAD(+) + NADPH = NADH + NADP(+)</text>
        <dbReference type="Rhea" id="RHEA:11692"/>
        <dbReference type="ChEBI" id="CHEBI:57540"/>
        <dbReference type="ChEBI" id="CHEBI:57783"/>
        <dbReference type="ChEBI" id="CHEBI:57945"/>
        <dbReference type="ChEBI" id="CHEBI:58349"/>
        <dbReference type="EC" id="1.6.1.1"/>
    </reaction>
</comment>
<comment type="cofactor">
    <cofactor evidence="1">
        <name>FAD</name>
        <dbReference type="ChEBI" id="CHEBI:57692"/>
    </cofactor>
    <text evidence="1">Binds 1 FAD per subunit.</text>
</comment>
<comment type="subcellular location">
    <subcellularLocation>
        <location evidence="1">Cytoplasm</location>
    </subcellularLocation>
</comment>
<comment type="similarity">
    <text evidence="1">Belongs to the class-I pyridine nucleotide-disulfide oxidoreductase family.</text>
</comment>